<feature type="chain" id="PRO_0000337472" description="Elongation factor Tu">
    <location>
        <begin position="1"/>
        <end position="397"/>
    </location>
</feature>
<feature type="domain" description="tr-type G">
    <location>
        <begin position="10"/>
        <end position="207"/>
    </location>
</feature>
<feature type="region of interest" description="G1" evidence="1">
    <location>
        <begin position="19"/>
        <end position="26"/>
    </location>
</feature>
<feature type="region of interest" description="G2" evidence="1">
    <location>
        <begin position="60"/>
        <end position="64"/>
    </location>
</feature>
<feature type="region of interest" description="G3" evidence="1">
    <location>
        <begin position="81"/>
        <end position="84"/>
    </location>
</feature>
<feature type="region of interest" description="G4" evidence="1">
    <location>
        <begin position="136"/>
        <end position="139"/>
    </location>
</feature>
<feature type="region of interest" description="G5" evidence="1">
    <location>
        <begin position="174"/>
        <end position="176"/>
    </location>
</feature>
<feature type="binding site" evidence="2">
    <location>
        <begin position="19"/>
        <end position="26"/>
    </location>
    <ligand>
        <name>GTP</name>
        <dbReference type="ChEBI" id="CHEBI:37565"/>
    </ligand>
</feature>
<feature type="binding site" evidence="2">
    <location>
        <position position="26"/>
    </location>
    <ligand>
        <name>Mg(2+)</name>
        <dbReference type="ChEBI" id="CHEBI:18420"/>
    </ligand>
</feature>
<feature type="binding site" evidence="2">
    <location>
        <begin position="81"/>
        <end position="85"/>
    </location>
    <ligand>
        <name>GTP</name>
        <dbReference type="ChEBI" id="CHEBI:37565"/>
    </ligand>
</feature>
<feature type="binding site" evidence="2">
    <location>
        <begin position="136"/>
        <end position="139"/>
    </location>
    <ligand>
        <name>GTP</name>
        <dbReference type="ChEBI" id="CHEBI:37565"/>
    </ligand>
</feature>
<keyword id="KW-0963">Cytoplasm</keyword>
<keyword id="KW-0251">Elongation factor</keyword>
<keyword id="KW-0342">GTP-binding</keyword>
<keyword id="KW-0378">Hydrolase</keyword>
<keyword id="KW-0460">Magnesium</keyword>
<keyword id="KW-0479">Metal-binding</keyword>
<keyword id="KW-0547">Nucleotide-binding</keyword>
<keyword id="KW-0648">Protein biosynthesis</keyword>
<reference key="1">
    <citation type="journal article" date="2006" name="Nat. Biotechnol.">
        <title>Complete genome sequence of the entomopathogenic and metabolically versatile soil bacterium Pseudomonas entomophila.</title>
        <authorList>
            <person name="Vodovar N."/>
            <person name="Vallenet D."/>
            <person name="Cruveiller S."/>
            <person name="Rouy Z."/>
            <person name="Barbe V."/>
            <person name="Acosta C."/>
            <person name="Cattolico L."/>
            <person name="Jubin C."/>
            <person name="Lajus A."/>
            <person name="Segurens B."/>
            <person name="Vacherie B."/>
            <person name="Wincker P."/>
            <person name="Weissenbach J."/>
            <person name="Lemaitre B."/>
            <person name="Medigue C."/>
            <person name="Boccard F."/>
        </authorList>
    </citation>
    <scope>NUCLEOTIDE SEQUENCE [LARGE SCALE GENOMIC DNA]</scope>
    <source>
        <strain>L48</strain>
    </source>
</reference>
<accession>Q1IFW8</accession>
<dbReference type="EC" id="3.6.5.3" evidence="2"/>
<dbReference type="EMBL" id="CT573326">
    <property type="protein sequence ID" value="CAK13422.1"/>
    <property type="molecule type" value="Genomic_DNA"/>
</dbReference>
<dbReference type="EMBL" id="CT573326">
    <property type="protein sequence ID" value="CAK13434.1"/>
    <property type="molecule type" value="Genomic_DNA"/>
</dbReference>
<dbReference type="SMR" id="Q1IFW8"/>
<dbReference type="STRING" id="384676.PSEEN0475"/>
<dbReference type="KEGG" id="pen:PSEEN0475"/>
<dbReference type="KEGG" id="pen:PSEEN0487"/>
<dbReference type="eggNOG" id="COG0050">
    <property type="taxonomic scope" value="Bacteria"/>
</dbReference>
<dbReference type="HOGENOM" id="CLU_007265_0_0_6"/>
<dbReference type="OrthoDB" id="9803139at2"/>
<dbReference type="Proteomes" id="UP000000658">
    <property type="component" value="Chromosome"/>
</dbReference>
<dbReference type="GO" id="GO:0005829">
    <property type="term" value="C:cytosol"/>
    <property type="evidence" value="ECO:0007669"/>
    <property type="project" value="TreeGrafter"/>
</dbReference>
<dbReference type="GO" id="GO:0005525">
    <property type="term" value="F:GTP binding"/>
    <property type="evidence" value="ECO:0007669"/>
    <property type="project" value="UniProtKB-UniRule"/>
</dbReference>
<dbReference type="GO" id="GO:0003924">
    <property type="term" value="F:GTPase activity"/>
    <property type="evidence" value="ECO:0007669"/>
    <property type="project" value="InterPro"/>
</dbReference>
<dbReference type="GO" id="GO:0097216">
    <property type="term" value="F:guanosine tetraphosphate binding"/>
    <property type="evidence" value="ECO:0007669"/>
    <property type="project" value="UniProtKB-ARBA"/>
</dbReference>
<dbReference type="GO" id="GO:0003746">
    <property type="term" value="F:translation elongation factor activity"/>
    <property type="evidence" value="ECO:0007669"/>
    <property type="project" value="UniProtKB-UniRule"/>
</dbReference>
<dbReference type="CDD" id="cd01884">
    <property type="entry name" value="EF_Tu"/>
    <property type="match status" value="1"/>
</dbReference>
<dbReference type="CDD" id="cd03697">
    <property type="entry name" value="EFTU_II"/>
    <property type="match status" value="1"/>
</dbReference>
<dbReference type="CDD" id="cd03707">
    <property type="entry name" value="EFTU_III"/>
    <property type="match status" value="1"/>
</dbReference>
<dbReference type="FunFam" id="2.40.30.10:FF:000001">
    <property type="entry name" value="Elongation factor Tu"/>
    <property type="match status" value="1"/>
</dbReference>
<dbReference type="FunFam" id="3.40.50.300:FF:000003">
    <property type="entry name" value="Elongation factor Tu"/>
    <property type="match status" value="1"/>
</dbReference>
<dbReference type="Gene3D" id="3.40.50.300">
    <property type="entry name" value="P-loop containing nucleotide triphosphate hydrolases"/>
    <property type="match status" value="1"/>
</dbReference>
<dbReference type="Gene3D" id="2.40.30.10">
    <property type="entry name" value="Translation factors"/>
    <property type="match status" value="2"/>
</dbReference>
<dbReference type="HAMAP" id="MF_00118_B">
    <property type="entry name" value="EF_Tu_B"/>
    <property type="match status" value="1"/>
</dbReference>
<dbReference type="InterPro" id="IPR041709">
    <property type="entry name" value="EF-Tu_GTP-bd"/>
</dbReference>
<dbReference type="InterPro" id="IPR050055">
    <property type="entry name" value="EF-Tu_GTPase"/>
</dbReference>
<dbReference type="InterPro" id="IPR004161">
    <property type="entry name" value="EFTu-like_2"/>
</dbReference>
<dbReference type="InterPro" id="IPR033720">
    <property type="entry name" value="EFTU_2"/>
</dbReference>
<dbReference type="InterPro" id="IPR031157">
    <property type="entry name" value="G_TR_CS"/>
</dbReference>
<dbReference type="InterPro" id="IPR027417">
    <property type="entry name" value="P-loop_NTPase"/>
</dbReference>
<dbReference type="InterPro" id="IPR005225">
    <property type="entry name" value="Small_GTP-bd"/>
</dbReference>
<dbReference type="InterPro" id="IPR000795">
    <property type="entry name" value="T_Tr_GTP-bd_dom"/>
</dbReference>
<dbReference type="InterPro" id="IPR009000">
    <property type="entry name" value="Transl_B-barrel_sf"/>
</dbReference>
<dbReference type="InterPro" id="IPR009001">
    <property type="entry name" value="Transl_elong_EF1A/Init_IF2_C"/>
</dbReference>
<dbReference type="InterPro" id="IPR004541">
    <property type="entry name" value="Transl_elong_EFTu/EF1A_bac/org"/>
</dbReference>
<dbReference type="InterPro" id="IPR004160">
    <property type="entry name" value="Transl_elong_EFTu/EF1A_C"/>
</dbReference>
<dbReference type="NCBIfam" id="TIGR00485">
    <property type="entry name" value="EF-Tu"/>
    <property type="match status" value="1"/>
</dbReference>
<dbReference type="NCBIfam" id="NF000766">
    <property type="entry name" value="PRK00049.1"/>
    <property type="match status" value="1"/>
</dbReference>
<dbReference type="NCBIfam" id="NF009372">
    <property type="entry name" value="PRK12735.1"/>
    <property type="match status" value="1"/>
</dbReference>
<dbReference type="NCBIfam" id="NF009373">
    <property type="entry name" value="PRK12736.1"/>
    <property type="match status" value="1"/>
</dbReference>
<dbReference type="NCBIfam" id="TIGR00231">
    <property type="entry name" value="small_GTP"/>
    <property type="match status" value="1"/>
</dbReference>
<dbReference type="PANTHER" id="PTHR43721:SF22">
    <property type="entry name" value="ELONGATION FACTOR TU, MITOCHONDRIAL"/>
    <property type="match status" value="1"/>
</dbReference>
<dbReference type="PANTHER" id="PTHR43721">
    <property type="entry name" value="ELONGATION FACTOR TU-RELATED"/>
    <property type="match status" value="1"/>
</dbReference>
<dbReference type="Pfam" id="PF00009">
    <property type="entry name" value="GTP_EFTU"/>
    <property type="match status" value="1"/>
</dbReference>
<dbReference type="Pfam" id="PF03144">
    <property type="entry name" value="GTP_EFTU_D2"/>
    <property type="match status" value="1"/>
</dbReference>
<dbReference type="Pfam" id="PF03143">
    <property type="entry name" value="GTP_EFTU_D3"/>
    <property type="match status" value="1"/>
</dbReference>
<dbReference type="PRINTS" id="PR00315">
    <property type="entry name" value="ELONGATNFCT"/>
</dbReference>
<dbReference type="SUPFAM" id="SSF50465">
    <property type="entry name" value="EF-Tu/eEF-1alpha/eIF2-gamma C-terminal domain"/>
    <property type="match status" value="1"/>
</dbReference>
<dbReference type="SUPFAM" id="SSF52540">
    <property type="entry name" value="P-loop containing nucleoside triphosphate hydrolases"/>
    <property type="match status" value="1"/>
</dbReference>
<dbReference type="SUPFAM" id="SSF50447">
    <property type="entry name" value="Translation proteins"/>
    <property type="match status" value="1"/>
</dbReference>
<dbReference type="PROSITE" id="PS00301">
    <property type="entry name" value="G_TR_1"/>
    <property type="match status" value="1"/>
</dbReference>
<dbReference type="PROSITE" id="PS51722">
    <property type="entry name" value="G_TR_2"/>
    <property type="match status" value="1"/>
</dbReference>
<comment type="function">
    <text evidence="2">GTP hydrolase that promotes the GTP-dependent binding of aminoacyl-tRNA to the A-site of ribosomes during protein biosynthesis.</text>
</comment>
<comment type="catalytic activity">
    <reaction evidence="2">
        <text>GTP + H2O = GDP + phosphate + H(+)</text>
        <dbReference type="Rhea" id="RHEA:19669"/>
        <dbReference type="ChEBI" id="CHEBI:15377"/>
        <dbReference type="ChEBI" id="CHEBI:15378"/>
        <dbReference type="ChEBI" id="CHEBI:37565"/>
        <dbReference type="ChEBI" id="CHEBI:43474"/>
        <dbReference type="ChEBI" id="CHEBI:58189"/>
        <dbReference type="EC" id="3.6.5.3"/>
    </reaction>
    <physiologicalReaction direction="left-to-right" evidence="2">
        <dbReference type="Rhea" id="RHEA:19670"/>
    </physiologicalReaction>
</comment>
<comment type="subunit">
    <text evidence="2">Monomer.</text>
</comment>
<comment type="subcellular location">
    <subcellularLocation>
        <location evidence="2">Cytoplasm</location>
    </subcellularLocation>
</comment>
<comment type="similarity">
    <text evidence="2">Belongs to the TRAFAC class translation factor GTPase superfamily. Classic translation factor GTPase family. EF-Tu/EF-1A subfamily.</text>
</comment>
<sequence>MAKEKFDRSLPHVNVGTIGHVDHGKTTLTAALTRVCSEVFGSAVVEFDKIDSAPEEKARGITINTAHVEYNSNIRHYAHVDCPGHADYVKNMITGAAQMDGAILVCSAADGPMPQTREHILLSRQVGVPYIVVFLNKADLVDDAELLELVEMEVRDLLSTYDFPGDDTPIIIGSARMALEGKDDNEMGTTAVKKLVETLDAYIPEPVRAIDQPFLMPIEDVFSISGRGTVVTGRIERGIVRVQDPLEIVGLRDTTTTTCTGVEMFRKLLDEGRAGENCGVLLRGTKRDDVERGQVLVKPGSVKPHTKFTAEVYVLSKEEGGRHTPFFKGYRPQFYFRTTDVTGNCELPEGVEMVMPGDNIQMTVTLIKTIAMEDGLRFAIREGGRTVGAGVVAKIIE</sequence>
<protein>
    <recommendedName>
        <fullName evidence="2">Elongation factor Tu</fullName>
        <shortName evidence="2">EF-Tu</shortName>
        <ecNumber evidence="2">3.6.5.3</ecNumber>
    </recommendedName>
</protein>
<evidence type="ECO:0000250" key="1"/>
<evidence type="ECO:0000255" key="2">
    <source>
        <dbReference type="HAMAP-Rule" id="MF_00118"/>
    </source>
</evidence>
<name>EFTU_PSEE4</name>
<gene>
    <name evidence="2" type="primary">tuf1</name>
    <name type="synonym">tufB</name>
    <name type="ordered locus">PSEEN0475</name>
</gene>
<gene>
    <name evidence="2" type="primary">tuf2</name>
    <name type="synonym">tufA</name>
    <name type="ordered locus">PSEEN0487</name>
</gene>
<organism>
    <name type="scientific">Pseudomonas entomophila (strain L48)</name>
    <dbReference type="NCBI Taxonomy" id="384676"/>
    <lineage>
        <taxon>Bacteria</taxon>
        <taxon>Pseudomonadati</taxon>
        <taxon>Pseudomonadota</taxon>
        <taxon>Gammaproteobacteria</taxon>
        <taxon>Pseudomonadales</taxon>
        <taxon>Pseudomonadaceae</taxon>
        <taxon>Pseudomonas</taxon>
    </lineage>
</organism>
<proteinExistence type="inferred from homology"/>